<name>ML1A_LACTA</name>
<proteinExistence type="evidence at protein level"/>
<dbReference type="EMBL" id="KT591334">
    <property type="protein sequence ID" value="AOH73456.1"/>
    <property type="molecule type" value="mRNA"/>
</dbReference>
<dbReference type="SMR" id="C0HJV7"/>
<dbReference type="GO" id="GO:0005576">
    <property type="term" value="C:extracellular region"/>
    <property type="evidence" value="ECO:0007669"/>
    <property type="project" value="UniProtKB-SubCell"/>
</dbReference>
<dbReference type="InterPro" id="IPR018802">
    <property type="entry name" value="Latarcin_precursor"/>
</dbReference>
<dbReference type="Pfam" id="PF10279">
    <property type="entry name" value="Latarcin"/>
    <property type="match status" value="1"/>
</dbReference>
<protein>
    <recommendedName>
        <fullName evidence="3">Met-lysine-1a</fullName>
        <shortName evidence="3">MLys-1a</shortName>
    </recommendedName>
</protein>
<evidence type="ECO:0000255" key="1"/>
<evidence type="ECO:0000269" key="2">
    <source>
    </source>
</evidence>
<evidence type="ECO:0000303" key="3">
    <source>
    </source>
</evidence>
<evidence type="ECO:0000305" key="4">
    <source>
    </source>
</evidence>
<feature type="signal peptide" evidence="1">
    <location>
        <begin position="1"/>
        <end position="22"/>
    </location>
</feature>
<feature type="propeptide" id="PRO_0000444425" evidence="2">
    <location>
        <begin position="23"/>
        <end position="69"/>
    </location>
</feature>
<feature type="peptide" id="PRO_0000437253" description="Met-lysine-1a" evidence="2">
    <location>
        <begin position="70"/>
        <end position="120"/>
    </location>
</feature>
<feature type="modified residue" description="Methionine amide" evidence="2">
    <location>
        <position position="120"/>
    </location>
</feature>
<reference key="1">
    <citation type="journal article" date="2016" name="Biochem. J.">
        <title>Lachesana tarabaevi, an expert in membrane-active toxins.</title>
        <authorList>
            <person name="Kuzmenkov A.I."/>
            <person name="Sachkova M.Y."/>
            <person name="Kovalchuk S.I."/>
            <person name="Grishin E.V."/>
            <person name="Vassilevski A.A."/>
        </authorList>
    </citation>
    <scope>NUCLEOTIDE SEQUENCE [MRNA]</scope>
    <scope>PROTEIN SEQUENCE OF 70-120</scope>
    <scope>FUNCTION</scope>
    <scope>SUBCELLULAR LOCATION</scope>
    <scope>MASS SPECTROMETRY</scope>
    <scope>AMIDATION AT MET-120</scope>
    <source>
        <tissue evidence="3">Venom</tissue>
    </source>
</reference>
<comment type="function">
    <text evidence="2">Shows no antimicrobial activity against Gram-positive bacterium B.subtilis B-501 or Gram-negative bacterium E.coli DH5-alpha at concentrations up to 20 ug/ml. Shows no toxicity towards insect (S.carnaria) larvae.</text>
</comment>
<comment type="subcellular location">
    <subcellularLocation>
        <location evidence="2">Secreted</location>
    </subcellularLocation>
</comment>
<comment type="tissue specificity">
    <text evidence="4">Expressed by the venom gland.</text>
</comment>
<comment type="mass spectrometry" mass="5951.9" method="MALDI" evidence="2"/>
<comment type="similarity">
    <text>Belongs to the met-lysine family.</text>
</comment>
<keyword id="KW-0027">Amidation</keyword>
<keyword id="KW-0903">Direct protein sequencing</keyword>
<keyword id="KW-0964">Secreted</keyword>
<keyword id="KW-0732">Signal</keyword>
<organism evidence="3">
    <name type="scientific">Lachesana tarabaevi</name>
    <name type="common">Spider</name>
    <dbReference type="NCBI Taxonomy" id="379576"/>
    <lineage>
        <taxon>Eukaryota</taxon>
        <taxon>Metazoa</taxon>
        <taxon>Ecdysozoa</taxon>
        <taxon>Arthropoda</taxon>
        <taxon>Chelicerata</taxon>
        <taxon>Arachnida</taxon>
        <taxon>Araneae</taxon>
        <taxon>Araneomorphae</taxon>
        <taxon>Entelegynae</taxon>
        <taxon>Entelegynae incertae sedis</taxon>
        <taxon>Zodariidae</taxon>
        <taxon>Lachesana</taxon>
    </lineage>
</organism>
<accession>C0HJV7</accession>
<accession>A0A1B3Z577</accession>
<sequence length="121" mass="13557">MKSFVFALALIVAFACISESKSDHTGYEEEENLEDSELTDLVTAALLEELAEASEMDDLSYTEEAGGERMDKLEEMALKLKDKLKTMAEKGAQMGEKLKEMLPKAIEKLKELTEKMKNKMG</sequence>